<reference key="1">
    <citation type="journal article" date="2008" name="Environ. Microbiol.">
        <title>The genome of Erwinia tasmaniensis strain Et1/99, a non-pathogenic bacterium in the genus Erwinia.</title>
        <authorList>
            <person name="Kube M."/>
            <person name="Migdoll A.M."/>
            <person name="Mueller I."/>
            <person name="Kuhl H."/>
            <person name="Beck A."/>
            <person name="Reinhardt R."/>
            <person name="Geider K."/>
        </authorList>
    </citation>
    <scope>NUCLEOTIDE SEQUENCE [LARGE SCALE GENOMIC DNA]</scope>
    <source>
        <strain>DSM 17950 / CFBP 7177 / CIP 109463 / NCPPB 4357 / Et1/99</strain>
    </source>
</reference>
<sequence length="169" mass="19417">MSVLQVLHFPDERLRIVAKPVKEVNANIQRIVDDMFETMYAEEGIGLAATQVDIHQRIIVIDVSEDRDERLVLIDPELLEKSGETGIEEGCLSIPEQRALVPRAEKVKIRALDRDGNSFELEADGLLAICIQHEMDHLVGKLFIDYLSPMKRQRIRQKLEKLYRQSARD</sequence>
<feature type="chain" id="PRO_1000097310" description="Peptide deformylase">
    <location>
        <begin position="1"/>
        <end position="169"/>
    </location>
</feature>
<feature type="active site" evidence="1">
    <location>
        <position position="134"/>
    </location>
</feature>
<feature type="binding site" evidence="1">
    <location>
        <position position="91"/>
    </location>
    <ligand>
        <name>Fe cation</name>
        <dbReference type="ChEBI" id="CHEBI:24875"/>
    </ligand>
</feature>
<feature type="binding site" evidence="1">
    <location>
        <position position="133"/>
    </location>
    <ligand>
        <name>Fe cation</name>
        <dbReference type="ChEBI" id="CHEBI:24875"/>
    </ligand>
</feature>
<feature type="binding site" evidence="1">
    <location>
        <position position="137"/>
    </location>
    <ligand>
        <name>Fe cation</name>
        <dbReference type="ChEBI" id="CHEBI:24875"/>
    </ligand>
</feature>
<name>DEF_ERWT9</name>
<keyword id="KW-0378">Hydrolase</keyword>
<keyword id="KW-0408">Iron</keyword>
<keyword id="KW-0479">Metal-binding</keyword>
<keyword id="KW-0648">Protein biosynthesis</keyword>
<keyword id="KW-1185">Reference proteome</keyword>
<gene>
    <name evidence="1" type="primary">def</name>
    <name type="ordered locus">ETA_31280</name>
</gene>
<proteinExistence type="inferred from homology"/>
<organism>
    <name type="scientific">Erwinia tasmaniensis (strain DSM 17950 / CFBP 7177 / CIP 109463 / NCPPB 4357 / Et1/99)</name>
    <dbReference type="NCBI Taxonomy" id="465817"/>
    <lineage>
        <taxon>Bacteria</taxon>
        <taxon>Pseudomonadati</taxon>
        <taxon>Pseudomonadota</taxon>
        <taxon>Gammaproteobacteria</taxon>
        <taxon>Enterobacterales</taxon>
        <taxon>Erwiniaceae</taxon>
        <taxon>Erwinia</taxon>
    </lineage>
</organism>
<protein>
    <recommendedName>
        <fullName evidence="1">Peptide deformylase</fullName>
        <shortName evidence="1">PDF</shortName>
        <ecNumber evidence="1">3.5.1.88</ecNumber>
    </recommendedName>
    <alternativeName>
        <fullName evidence="1">Polypeptide deformylase</fullName>
    </alternativeName>
</protein>
<accession>B2VK93</accession>
<dbReference type="EC" id="3.5.1.88" evidence="1"/>
<dbReference type="EMBL" id="CU468135">
    <property type="protein sequence ID" value="CAO98174.1"/>
    <property type="molecule type" value="Genomic_DNA"/>
</dbReference>
<dbReference type="RefSeq" id="WP_012442822.1">
    <property type="nucleotide sequence ID" value="NC_010694.1"/>
</dbReference>
<dbReference type="SMR" id="B2VK93"/>
<dbReference type="STRING" id="465817.ETA_31280"/>
<dbReference type="KEGG" id="eta:ETA_31280"/>
<dbReference type="eggNOG" id="COG0242">
    <property type="taxonomic scope" value="Bacteria"/>
</dbReference>
<dbReference type="HOGENOM" id="CLU_061901_2_1_6"/>
<dbReference type="OrthoDB" id="9804313at2"/>
<dbReference type="Proteomes" id="UP000001726">
    <property type="component" value="Chromosome"/>
</dbReference>
<dbReference type="GO" id="GO:0046872">
    <property type="term" value="F:metal ion binding"/>
    <property type="evidence" value="ECO:0007669"/>
    <property type="project" value="UniProtKB-KW"/>
</dbReference>
<dbReference type="GO" id="GO:0042586">
    <property type="term" value="F:peptide deformylase activity"/>
    <property type="evidence" value="ECO:0007669"/>
    <property type="project" value="UniProtKB-UniRule"/>
</dbReference>
<dbReference type="GO" id="GO:0043686">
    <property type="term" value="P:co-translational protein modification"/>
    <property type="evidence" value="ECO:0007669"/>
    <property type="project" value="TreeGrafter"/>
</dbReference>
<dbReference type="GO" id="GO:0006412">
    <property type="term" value="P:translation"/>
    <property type="evidence" value="ECO:0007669"/>
    <property type="project" value="UniProtKB-UniRule"/>
</dbReference>
<dbReference type="CDD" id="cd00487">
    <property type="entry name" value="Pep_deformylase"/>
    <property type="match status" value="1"/>
</dbReference>
<dbReference type="FunFam" id="3.90.45.10:FF:000001">
    <property type="entry name" value="Peptide deformylase"/>
    <property type="match status" value="1"/>
</dbReference>
<dbReference type="Gene3D" id="3.90.45.10">
    <property type="entry name" value="Peptide deformylase"/>
    <property type="match status" value="1"/>
</dbReference>
<dbReference type="HAMAP" id="MF_00163">
    <property type="entry name" value="Pep_deformylase"/>
    <property type="match status" value="1"/>
</dbReference>
<dbReference type="InterPro" id="IPR023635">
    <property type="entry name" value="Peptide_deformylase"/>
</dbReference>
<dbReference type="InterPro" id="IPR036821">
    <property type="entry name" value="Peptide_deformylase_sf"/>
</dbReference>
<dbReference type="NCBIfam" id="TIGR00079">
    <property type="entry name" value="pept_deformyl"/>
    <property type="match status" value="1"/>
</dbReference>
<dbReference type="NCBIfam" id="NF001159">
    <property type="entry name" value="PRK00150.1-3"/>
    <property type="match status" value="1"/>
</dbReference>
<dbReference type="PANTHER" id="PTHR10458">
    <property type="entry name" value="PEPTIDE DEFORMYLASE"/>
    <property type="match status" value="1"/>
</dbReference>
<dbReference type="PANTHER" id="PTHR10458:SF21">
    <property type="entry name" value="PEPTIDE DEFORMYLASE"/>
    <property type="match status" value="1"/>
</dbReference>
<dbReference type="Pfam" id="PF01327">
    <property type="entry name" value="Pep_deformylase"/>
    <property type="match status" value="1"/>
</dbReference>
<dbReference type="PIRSF" id="PIRSF004749">
    <property type="entry name" value="Pep_def"/>
    <property type="match status" value="1"/>
</dbReference>
<dbReference type="PRINTS" id="PR01576">
    <property type="entry name" value="PDEFORMYLASE"/>
</dbReference>
<dbReference type="SUPFAM" id="SSF56420">
    <property type="entry name" value="Peptide deformylase"/>
    <property type="match status" value="1"/>
</dbReference>
<evidence type="ECO:0000255" key="1">
    <source>
        <dbReference type="HAMAP-Rule" id="MF_00163"/>
    </source>
</evidence>
<comment type="function">
    <text evidence="1">Removes the formyl group from the N-terminal Met of newly synthesized proteins. Requires at least a dipeptide for an efficient rate of reaction. N-terminal L-methionine is a prerequisite for activity but the enzyme has broad specificity at other positions.</text>
</comment>
<comment type="catalytic activity">
    <reaction evidence="1">
        <text>N-terminal N-formyl-L-methionyl-[peptide] + H2O = N-terminal L-methionyl-[peptide] + formate</text>
        <dbReference type="Rhea" id="RHEA:24420"/>
        <dbReference type="Rhea" id="RHEA-COMP:10639"/>
        <dbReference type="Rhea" id="RHEA-COMP:10640"/>
        <dbReference type="ChEBI" id="CHEBI:15377"/>
        <dbReference type="ChEBI" id="CHEBI:15740"/>
        <dbReference type="ChEBI" id="CHEBI:49298"/>
        <dbReference type="ChEBI" id="CHEBI:64731"/>
        <dbReference type="EC" id="3.5.1.88"/>
    </reaction>
</comment>
<comment type="cofactor">
    <cofactor evidence="1">
        <name>Fe(2+)</name>
        <dbReference type="ChEBI" id="CHEBI:29033"/>
    </cofactor>
    <text evidence="1">Binds 1 Fe(2+) ion.</text>
</comment>
<comment type="similarity">
    <text evidence="1">Belongs to the polypeptide deformylase family.</text>
</comment>